<gene>
    <name evidence="1" type="primary">yhaM</name>
    <name type="ordered locus">BcerKBAB4_0927</name>
</gene>
<comment type="function">
    <text evidence="1">Shows a 3'-5' exoribonuclease activity.</text>
</comment>
<comment type="similarity">
    <text evidence="1">Belongs to the YhaM family.</text>
</comment>
<proteinExistence type="inferred from homology"/>
<evidence type="ECO:0000255" key="1">
    <source>
        <dbReference type="HAMAP-Rule" id="MF_01427"/>
    </source>
</evidence>
<evidence type="ECO:0000255" key="2">
    <source>
        <dbReference type="PROSITE-ProRule" id="PRU01175"/>
    </source>
</evidence>
<reference key="1">
    <citation type="journal article" date="2008" name="Chem. Biol. Interact.">
        <title>Extending the Bacillus cereus group genomics to putative food-borne pathogens of different toxicity.</title>
        <authorList>
            <person name="Lapidus A."/>
            <person name="Goltsman E."/>
            <person name="Auger S."/>
            <person name="Galleron N."/>
            <person name="Segurens B."/>
            <person name="Dossat C."/>
            <person name="Land M.L."/>
            <person name="Broussolle V."/>
            <person name="Brillard J."/>
            <person name="Guinebretiere M.-H."/>
            <person name="Sanchis V."/>
            <person name="Nguen-the C."/>
            <person name="Lereclus D."/>
            <person name="Richardson P."/>
            <person name="Wincker P."/>
            <person name="Weissenbach J."/>
            <person name="Ehrlich S.D."/>
            <person name="Sorokin A."/>
        </authorList>
    </citation>
    <scope>NUCLEOTIDE SEQUENCE [LARGE SCALE GENOMIC DNA]</scope>
    <source>
        <strain>KBAB4</strain>
    </source>
</reference>
<organism>
    <name type="scientific">Bacillus mycoides (strain KBAB4)</name>
    <name type="common">Bacillus weihenstephanensis</name>
    <dbReference type="NCBI Taxonomy" id="315730"/>
    <lineage>
        <taxon>Bacteria</taxon>
        <taxon>Bacillati</taxon>
        <taxon>Bacillota</taxon>
        <taxon>Bacilli</taxon>
        <taxon>Bacillales</taxon>
        <taxon>Bacillaceae</taxon>
        <taxon>Bacillus</taxon>
        <taxon>Bacillus cereus group</taxon>
    </lineage>
</organism>
<name>YHAM_BACMK</name>
<feature type="chain" id="PRO_1000145738" description="3'-5' exoribonuclease YhaM">
    <location>
        <begin position="1"/>
        <end position="314"/>
    </location>
</feature>
<feature type="domain" description="HD" evidence="2">
    <location>
        <begin position="163"/>
        <end position="279"/>
    </location>
</feature>
<dbReference type="EC" id="3.1.-.-" evidence="1"/>
<dbReference type="EMBL" id="CP000903">
    <property type="protein sequence ID" value="ABY42180.1"/>
    <property type="molecule type" value="Genomic_DNA"/>
</dbReference>
<dbReference type="RefSeq" id="WP_012260489.1">
    <property type="nucleotide sequence ID" value="NC_010184.1"/>
</dbReference>
<dbReference type="SMR" id="A9VI37"/>
<dbReference type="KEGG" id="bwe:BcerKBAB4_0927"/>
<dbReference type="eggNOG" id="COG3481">
    <property type="taxonomic scope" value="Bacteria"/>
</dbReference>
<dbReference type="HOGENOM" id="CLU_056349_2_0_9"/>
<dbReference type="Proteomes" id="UP000002154">
    <property type="component" value="Chromosome"/>
</dbReference>
<dbReference type="GO" id="GO:0000175">
    <property type="term" value="F:3'-5'-RNA exonuclease activity"/>
    <property type="evidence" value="ECO:0007669"/>
    <property type="project" value="UniProtKB-UniRule"/>
</dbReference>
<dbReference type="GO" id="GO:0003676">
    <property type="term" value="F:nucleic acid binding"/>
    <property type="evidence" value="ECO:0007669"/>
    <property type="project" value="InterPro"/>
</dbReference>
<dbReference type="GO" id="GO:0031125">
    <property type="term" value="P:rRNA 3'-end processing"/>
    <property type="evidence" value="ECO:0007669"/>
    <property type="project" value="TreeGrafter"/>
</dbReference>
<dbReference type="CDD" id="cd00077">
    <property type="entry name" value="HDc"/>
    <property type="match status" value="1"/>
</dbReference>
<dbReference type="CDD" id="cd04492">
    <property type="entry name" value="YhaM_OBF_like"/>
    <property type="match status" value="1"/>
</dbReference>
<dbReference type="FunFam" id="1.10.3210.10:FF:000008">
    <property type="entry name" value="3'-5' exoribonuclease YhaM"/>
    <property type="match status" value="1"/>
</dbReference>
<dbReference type="Gene3D" id="1.10.3210.10">
    <property type="entry name" value="Hypothetical protein af1432"/>
    <property type="match status" value="1"/>
</dbReference>
<dbReference type="Gene3D" id="2.40.50.140">
    <property type="entry name" value="Nucleic acid-binding proteins"/>
    <property type="match status" value="1"/>
</dbReference>
<dbReference type="HAMAP" id="MF_01427">
    <property type="entry name" value="3_5_Exoribonuc_YhaM"/>
    <property type="match status" value="1"/>
</dbReference>
<dbReference type="InterPro" id="IPR020873">
    <property type="entry name" value="3'-5'_exoribonuclease_YhaM"/>
</dbReference>
<dbReference type="InterPro" id="IPR003607">
    <property type="entry name" value="HD/PDEase_dom"/>
</dbReference>
<dbReference type="InterPro" id="IPR006674">
    <property type="entry name" value="HD_domain"/>
</dbReference>
<dbReference type="InterPro" id="IPR012340">
    <property type="entry name" value="NA-bd_OB-fold"/>
</dbReference>
<dbReference type="InterPro" id="IPR004365">
    <property type="entry name" value="NA-bd_OB_tRNA"/>
</dbReference>
<dbReference type="InterPro" id="IPR050798">
    <property type="entry name" value="YhaM_exoribonuc/phosphodiest"/>
</dbReference>
<dbReference type="NCBIfam" id="NF010007">
    <property type="entry name" value="PRK13480.1"/>
    <property type="match status" value="1"/>
</dbReference>
<dbReference type="PANTHER" id="PTHR37294">
    <property type="entry name" value="3'-5' EXORIBONUCLEASE YHAM"/>
    <property type="match status" value="1"/>
</dbReference>
<dbReference type="PANTHER" id="PTHR37294:SF1">
    <property type="entry name" value="3'-5' EXORIBONUCLEASE YHAM"/>
    <property type="match status" value="1"/>
</dbReference>
<dbReference type="Pfam" id="PF01966">
    <property type="entry name" value="HD"/>
    <property type="match status" value="1"/>
</dbReference>
<dbReference type="Pfam" id="PF01336">
    <property type="entry name" value="tRNA_anti-codon"/>
    <property type="match status" value="1"/>
</dbReference>
<dbReference type="SMART" id="SM00471">
    <property type="entry name" value="HDc"/>
    <property type="match status" value="1"/>
</dbReference>
<dbReference type="SUPFAM" id="SSF109604">
    <property type="entry name" value="HD-domain/PDEase-like"/>
    <property type="match status" value="1"/>
</dbReference>
<dbReference type="SUPFAM" id="SSF50249">
    <property type="entry name" value="Nucleic acid-binding proteins"/>
    <property type="match status" value="1"/>
</dbReference>
<dbReference type="PROSITE" id="PS51831">
    <property type="entry name" value="HD"/>
    <property type="match status" value="1"/>
</dbReference>
<keyword id="KW-0269">Exonuclease</keyword>
<keyword id="KW-0378">Hydrolase</keyword>
<keyword id="KW-0540">Nuclease</keyword>
<protein>
    <recommendedName>
        <fullName evidence="1">3'-5' exoribonuclease YhaM</fullName>
        <ecNumber evidence="1">3.1.-.-</ecNumber>
    </recommendedName>
</protein>
<sequence>MKKKIVEYEVGEQVDVFLLIKTATKGLASNGKPFLTVILQDPSGDIEAKLWDVSPEVEKQYVAETIVKVAGDILNYKGRIQLRVKQIRVANENEVTDISDFVEKAPIKKEDMVEKITQYIFEMRNPNIQRLTRHLLNKHQNEFLEYPAAMKNHHEFVSGLAYHVVSMLDLAKAISALYPSLDKDLLYAGVILHDLGKVFELSGPISTTYTLEGNLLGHISIMVNEIGKAAEELQIDAEEVLILQHIVLSHHGKAEWGSPKPPLVKEAEILHYIDNLDAKMNMMDRALGRTKPGEYTERVFALDNRSFYKPTFHN</sequence>
<accession>A9VI37</accession>